<evidence type="ECO:0000255" key="1">
    <source>
        <dbReference type="HAMAP-Rule" id="MF_01227"/>
    </source>
</evidence>
<comment type="function">
    <text evidence="1">Catalyzes the ATP-dependent amination of UTP to CTP with either L-glutamine or ammonia as the source of nitrogen. Regulates intracellular CTP levels through interactions with the four ribonucleotide triphosphates.</text>
</comment>
<comment type="catalytic activity">
    <reaction evidence="1">
        <text>UTP + L-glutamine + ATP + H2O = CTP + L-glutamate + ADP + phosphate + 2 H(+)</text>
        <dbReference type="Rhea" id="RHEA:26426"/>
        <dbReference type="ChEBI" id="CHEBI:15377"/>
        <dbReference type="ChEBI" id="CHEBI:15378"/>
        <dbReference type="ChEBI" id="CHEBI:29985"/>
        <dbReference type="ChEBI" id="CHEBI:30616"/>
        <dbReference type="ChEBI" id="CHEBI:37563"/>
        <dbReference type="ChEBI" id="CHEBI:43474"/>
        <dbReference type="ChEBI" id="CHEBI:46398"/>
        <dbReference type="ChEBI" id="CHEBI:58359"/>
        <dbReference type="ChEBI" id="CHEBI:456216"/>
        <dbReference type="EC" id="6.3.4.2"/>
    </reaction>
</comment>
<comment type="catalytic activity">
    <reaction evidence="1">
        <text>L-glutamine + H2O = L-glutamate + NH4(+)</text>
        <dbReference type="Rhea" id="RHEA:15889"/>
        <dbReference type="ChEBI" id="CHEBI:15377"/>
        <dbReference type="ChEBI" id="CHEBI:28938"/>
        <dbReference type="ChEBI" id="CHEBI:29985"/>
        <dbReference type="ChEBI" id="CHEBI:58359"/>
    </reaction>
</comment>
<comment type="catalytic activity">
    <reaction evidence="1">
        <text>UTP + NH4(+) + ATP = CTP + ADP + phosphate + 2 H(+)</text>
        <dbReference type="Rhea" id="RHEA:16597"/>
        <dbReference type="ChEBI" id="CHEBI:15378"/>
        <dbReference type="ChEBI" id="CHEBI:28938"/>
        <dbReference type="ChEBI" id="CHEBI:30616"/>
        <dbReference type="ChEBI" id="CHEBI:37563"/>
        <dbReference type="ChEBI" id="CHEBI:43474"/>
        <dbReference type="ChEBI" id="CHEBI:46398"/>
        <dbReference type="ChEBI" id="CHEBI:456216"/>
    </reaction>
</comment>
<comment type="activity regulation">
    <text evidence="1">Allosterically activated by GTP, when glutamine is the substrate; GTP has no effect on the reaction when ammonia is the substrate. The allosteric effector GTP functions by stabilizing the protein conformation that binds the tetrahedral intermediate(s) formed during glutamine hydrolysis. Inhibited by the product CTP, via allosteric rather than competitive inhibition.</text>
</comment>
<comment type="pathway">
    <text evidence="1">Pyrimidine metabolism; CTP biosynthesis via de novo pathway; CTP from UDP: step 2/2.</text>
</comment>
<comment type="subunit">
    <text evidence="1">Homotetramer.</text>
</comment>
<comment type="miscellaneous">
    <text evidence="1">CTPSs have evolved a hybrid strategy for distinguishing between UTP and CTP. The overlapping regions of the product feedback inhibitory and substrate sites recognize a common feature in both compounds, the triphosphate moiety. To differentiate isosteric substrate and product pyrimidine rings, an additional pocket far from the expected kinase/ligase catalytic site, specifically recognizes the cytosine and ribose portions of the product inhibitor.</text>
</comment>
<comment type="similarity">
    <text evidence="1">Belongs to the CTP synthase family.</text>
</comment>
<sequence length="537" mass="59645">MPFKCIFLTGGVVSSLGKGLTAASLALILERQRLNVAMLKLDPYLNVDPGTMNPFEHGEIYVTDDGVETDLDLGHYHRFSSAALSRHSSATSGQIYARVIKREREGDYLGSTVQVIPHITNEIIQVILDAAKEHSPDVLIVEIGGTIGDIESLPFLEAIRQFRYDHSEDCLNIHMTYVPYLQAADEVKSKPTQHSVQTLRGIGIIPDAILCRSEKPLTQEVKSKISLFCNVPNRAVFNVIDVKHTIYEMPLMLAQEKIANFIGEKLKLATVPENLDDWRVLVNQLSQDLPKVKIGVVGKYVQHRDAYKSIFEALTHAALRLGHAAEIIPIDAEDENLTMELSQCDACLVPGGFGVRGWEGKIAAAKFCREQGIPYFGICLGMQVLVVEYARNVLNLDQANSLEMDPNTPHPIVYVMEGQDPLVATGGTMRLGAYPCLLKPGSKAHKAYNESSLIQERHRHRYEVNPDYIQSLEDHGLRIVGTCPPQGLCEIIEVSDHPWMIGVQFHPEFVSKLISPHPLFIAFIEAALVYSKDASHV</sequence>
<gene>
    <name evidence="1" type="primary">pyrG</name>
    <name type="ordered locus">CPn_0236</name>
    <name type="ordered locus">CP_0526</name>
    <name type="ordered locus">CpB0242</name>
</gene>
<feature type="chain" id="PRO_0000138176" description="CTP synthase">
    <location>
        <begin position="1"/>
        <end position="537"/>
    </location>
</feature>
<feature type="domain" description="Glutamine amidotransferase type-1" evidence="1">
    <location>
        <begin position="293"/>
        <end position="533"/>
    </location>
</feature>
<feature type="region of interest" description="Amidoligase domain" evidence="1">
    <location>
        <begin position="1"/>
        <end position="268"/>
    </location>
</feature>
<feature type="active site" description="Nucleophile; for glutamine hydrolysis" evidence="1">
    <location>
        <position position="379"/>
    </location>
</feature>
<feature type="active site" evidence="1">
    <location>
        <position position="506"/>
    </location>
</feature>
<feature type="active site" evidence="1">
    <location>
        <position position="508"/>
    </location>
</feature>
<feature type="binding site" evidence="1">
    <location>
        <position position="14"/>
    </location>
    <ligand>
        <name>CTP</name>
        <dbReference type="ChEBI" id="CHEBI:37563"/>
        <note>allosteric inhibitor</note>
    </ligand>
</feature>
<feature type="binding site" evidence="1">
    <location>
        <position position="14"/>
    </location>
    <ligand>
        <name>UTP</name>
        <dbReference type="ChEBI" id="CHEBI:46398"/>
    </ligand>
</feature>
<feature type="binding site" evidence="1">
    <location>
        <begin position="15"/>
        <end position="20"/>
    </location>
    <ligand>
        <name>ATP</name>
        <dbReference type="ChEBI" id="CHEBI:30616"/>
    </ligand>
</feature>
<feature type="binding site" evidence="1">
    <location>
        <position position="72"/>
    </location>
    <ligand>
        <name>ATP</name>
        <dbReference type="ChEBI" id="CHEBI:30616"/>
    </ligand>
</feature>
<feature type="binding site" evidence="1">
    <location>
        <position position="72"/>
    </location>
    <ligand>
        <name>Mg(2+)</name>
        <dbReference type="ChEBI" id="CHEBI:18420"/>
    </ligand>
</feature>
<feature type="binding site" evidence="1">
    <location>
        <position position="142"/>
    </location>
    <ligand>
        <name>Mg(2+)</name>
        <dbReference type="ChEBI" id="CHEBI:18420"/>
    </ligand>
</feature>
<feature type="binding site" evidence="1">
    <location>
        <begin position="149"/>
        <end position="151"/>
    </location>
    <ligand>
        <name>CTP</name>
        <dbReference type="ChEBI" id="CHEBI:37563"/>
        <note>allosteric inhibitor</note>
    </ligand>
</feature>
<feature type="binding site" evidence="1">
    <location>
        <begin position="188"/>
        <end position="193"/>
    </location>
    <ligand>
        <name>CTP</name>
        <dbReference type="ChEBI" id="CHEBI:37563"/>
        <note>allosteric inhibitor</note>
    </ligand>
</feature>
<feature type="binding site" evidence="1">
    <location>
        <begin position="188"/>
        <end position="193"/>
    </location>
    <ligand>
        <name>UTP</name>
        <dbReference type="ChEBI" id="CHEBI:46398"/>
    </ligand>
</feature>
<feature type="binding site" evidence="1">
    <location>
        <position position="224"/>
    </location>
    <ligand>
        <name>CTP</name>
        <dbReference type="ChEBI" id="CHEBI:37563"/>
        <note>allosteric inhibitor</note>
    </ligand>
</feature>
<feature type="binding site" evidence="1">
    <location>
        <position position="224"/>
    </location>
    <ligand>
        <name>UTP</name>
        <dbReference type="ChEBI" id="CHEBI:46398"/>
    </ligand>
</feature>
<feature type="binding site" evidence="1">
    <location>
        <position position="352"/>
    </location>
    <ligand>
        <name>L-glutamine</name>
        <dbReference type="ChEBI" id="CHEBI:58359"/>
    </ligand>
</feature>
<feature type="binding site" evidence="1">
    <location>
        <begin position="380"/>
        <end position="383"/>
    </location>
    <ligand>
        <name>L-glutamine</name>
        <dbReference type="ChEBI" id="CHEBI:58359"/>
    </ligand>
</feature>
<feature type="binding site" evidence="1">
    <location>
        <position position="403"/>
    </location>
    <ligand>
        <name>L-glutamine</name>
        <dbReference type="ChEBI" id="CHEBI:58359"/>
    </ligand>
</feature>
<feature type="binding site" evidence="1">
    <location>
        <position position="461"/>
    </location>
    <ligand>
        <name>L-glutamine</name>
        <dbReference type="ChEBI" id="CHEBI:58359"/>
    </ligand>
</feature>
<feature type="sequence variant" description="In strain: CWL029 and TW-183.">
    <original>R</original>
    <variation>K</variation>
    <location>
        <position position="279"/>
    </location>
</feature>
<protein>
    <recommendedName>
        <fullName evidence="1">CTP synthase</fullName>
        <ecNumber evidence="1">6.3.4.2</ecNumber>
    </recommendedName>
    <alternativeName>
        <fullName evidence="1">Cytidine 5'-triphosphate synthase</fullName>
    </alternativeName>
    <alternativeName>
        <fullName evidence="1">Cytidine triphosphate synthetase</fullName>
        <shortName evidence="1">CTP synthetase</shortName>
        <shortName evidence="1">CTPS</shortName>
    </alternativeName>
    <alternativeName>
        <fullName evidence="1">UTP--ammonia ligase</fullName>
    </alternativeName>
</protein>
<keyword id="KW-0067">ATP-binding</keyword>
<keyword id="KW-0315">Glutamine amidotransferase</keyword>
<keyword id="KW-0436">Ligase</keyword>
<keyword id="KW-0460">Magnesium</keyword>
<keyword id="KW-0479">Metal-binding</keyword>
<keyword id="KW-0547">Nucleotide-binding</keyword>
<keyword id="KW-0665">Pyrimidine biosynthesis</keyword>
<organism>
    <name type="scientific">Chlamydia pneumoniae</name>
    <name type="common">Chlamydophila pneumoniae</name>
    <dbReference type="NCBI Taxonomy" id="83558"/>
    <lineage>
        <taxon>Bacteria</taxon>
        <taxon>Pseudomonadati</taxon>
        <taxon>Chlamydiota</taxon>
        <taxon>Chlamydiia</taxon>
        <taxon>Chlamydiales</taxon>
        <taxon>Chlamydiaceae</taxon>
        <taxon>Chlamydia/Chlamydophila group</taxon>
        <taxon>Chlamydia</taxon>
    </lineage>
</organism>
<dbReference type="EC" id="6.3.4.2" evidence="1"/>
<dbReference type="EMBL" id="AE001363">
    <property type="protein sequence ID" value="AAD18389.1"/>
    <property type="molecule type" value="Genomic_DNA"/>
</dbReference>
<dbReference type="EMBL" id="AE002161">
    <property type="protein sequence ID" value="AAF38350.1"/>
    <property type="molecule type" value="Genomic_DNA"/>
</dbReference>
<dbReference type="EMBL" id="BA000008">
    <property type="protein sequence ID" value="BAA98446.1"/>
    <property type="molecule type" value="Genomic_DNA"/>
</dbReference>
<dbReference type="EMBL" id="AE009440">
    <property type="protein sequence ID" value="AAP98175.1"/>
    <property type="molecule type" value="Genomic_DNA"/>
</dbReference>
<dbReference type="PIR" id="A72103">
    <property type="entry name" value="A72103"/>
</dbReference>
<dbReference type="PIR" id="D86520">
    <property type="entry name" value="D86520"/>
</dbReference>
<dbReference type="PIR" id="E81568">
    <property type="entry name" value="E81568"/>
</dbReference>
<dbReference type="RefSeq" id="NP_224445.1">
    <property type="nucleotide sequence ID" value="NC_000922.1"/>
</dbReference>
<dbReference type="RefSeq" id="WP_010882888.1">
    <property type="nucleotide sequence ID" value="NZ_LN847257.1"/>
</dbReference>
<dbReference type="RefSeq" id="WP_010892089.1">
    <property type="nucleotide sequence ID" value="NZ_LN846995.1"/>
</dbReference>
<dbReference type="SMR" id="Q9Z8U8"/>
<dbReference type="STRING" id="406984.CPK_ORF00745"/>
<dbReference type="MEROPS" id="C26.964"/>
<dbReference type="GeneID" id="45050283"/>
<dbReference type="KEGG" id="cpa:CP_0526"/>
<dbReference type="KEGG" id="cpj:pyrG"/>
<dbReference type="KEGG" id="cpn:CPn_0236"/>
<dbReference type="KEGG" id="cpt:CpB0242"/>
<dbReference type="PATRIC" id="fig|115713.3.peg.266"/>
<dbReference type="eggNOG" id="COG0504">
    <property type="taxonomic scope" value="Bacteria"/>
</dbReference>
<dbReference type="HOGENOM" id="CLU_011675_5_0_0"/>
<dbReference type="OrthoDB" id="9801107at2"/>
<dbReference type="UniPathway" id="UPA00159">
    <property type="reaction ID" value="UER00277"/>
</dbReference>
<dbReference type="Proteomes" id="UP000000583">
    <property type="component" value="Chromosome"/>
</dbReference>
<dbReference type="Proteomes" id="UP000000801">
    <property type="component" value="Chromosome"/>
</dbReference>
<dbReference type="GO" id="GO:0005829">
    <property type="term" value="C:cytosol"/>
    <property type="evidence" value="ECO:0007669"/>
    <property type="project" value="TreeGrafter"/>
</dbReference>
<dbReference type="GO" id="GO:0005524">
    <property type="term" value="F:ATP binding"/>
    <property type="evidence" value="ECO:0007669"/>
    <property type="project" value="UniProtKB-KW"/>
</dbReference>
<dbReference type="GO" id="GO:0003883">
    <property type="term" value="F:CTP synthase activity"/>
    <property type="evidence" value="ECO:0007669"/>
    <property type="project" value="UniProtKB-UniRule"/>
</dbReference>
<dbReference type="GO" id="GO:0004359">
    <property type="term" value="F:glutaminase activity"/>
    <property type="evidence" value="ECO:0007669"/>
    <property type="project" value="RHEA"/>
</dbReference>
<dbReference type="GO" id="GO:0042802">
    <property type="term" value="F:identical protein binding"/>
    <property type="evidence" value="ECO:0007669"/>
    <property type="project" value="TreeGrafter"/>
</dbReference>
<dbReference type="GO" id="GO:0046872">
    <property type="term" value="F:metal ion binding"/>
    <property type="evidence" value="ECO:0007669"/>
    <property type="project" value="UniProtKB-KW"/>
</dbReference>
<dbReference type="GO" id="GO:0044210">
    <property type="term" value="P:'de novo' CTP biosynthetic process"/>
    <property type="evidence" value="ECO:0007669"/>
    <property type="project" value="UniProtKB-UniRule"/>
</dbReference>
<dbReference type="GO" id="GO:0019856">
    <property type="term" value="P:pyrimidine nucleobase biosynthetic process"/>
    <property type="evidence" value="ECO:0007669"/>
    <property type="project" value="TreeGrafter"/>
</dbReference>
<dbReference type="CDD" id="cd03113">
    <property type="entry name" value="CTPS_N"/>
    <property type="match status" value="1"/>
</dbReference>
<dbReference type="CDD" id="cd01746">
    <property type="entry name" value="GATase1_CTP_Synthase"/>
    <property type="match status" value="1"/>
</dbReference>
<dbReference type="FunFam" id="3.40.50.300:FF:000009">
    <property type="entry name" value="CTP synthase"/>
    <property type="match status" value="1"/>
</dbReference>
<dbReference type="FunFam" id="3.40.50.880:FF:000002">
    <property type="entry name" value="CTP synthase"/>
    <property type="match status" value="1"/>
</dbReference>
<dbReference type="Gene3D" id="3.40.50.880">
    <property type="match status" value="1"/>
</dbReference>
<dbReference type="Gene3D" id="3.40.50.300">
    <property type="entry name" value="P-loop containing nucleotide triphosphate hydrolases"/>
    <property type="match status" value="1"/>
</dbReference>
<dbReference type="HAMAP" id="MF_01227">
    <property type="entry name" value="PyrG"/>
    <property type="match status" value="1"/>
</dbReference>
<dbReference type="InterPro" id="IPR029062">
    <property type="entry name" value="Class_I_gatase-like"/>
</dbReference>
<dbReference type="InterPro" id="IPR004468">
    <property type="entry name" value="CTP_synthase"/>
</dbReference>
<dbReference type="InterPro" id="IPR017456">
    <property type="entry name" value="CTP_synthase_N"/>
</dbReference>
<dbReference type="InterPro" id="IPR017926">
    <property type="entry name" value="GATASE"/>
</dbReference>
<dbReference type="InterPro" id="IPR033828">
    <property type="entry name" value="GATase1_CTP_Synthase"/>
</dbReference>
<dbReference type="InterPro" id="IPR027417">
    <property type="entry name" value="P-loop_NTPase"/>
</dbReference>
<dbReference type="NCBIfam" id="NF003792">
    <property type="entry name" value="PRK05380.1"/>
    <property type="match status" value="1"/>
</dbReference>
<dbReference type="NCBIfam" id="TIGR00337">
    <property type="entry name" value="PyrG"/>
    <property type="match status" value="1"/>
</dbReference>
<dbReference type="PANTHER" id="PTHR11550">
    <property type="entry name" value="CTP SYNTHASE"/>
    <property type="match status" value="1"/>
</dbReference>
<dbReference type="PANTHER" id="PTHR11550:SF0">
    <property type="entry name" value="CTP SYNTHASE-RELATED"/>
    <property type="match status" value="1"/>
</dbReference>
<dbReference type="Pfam" id="PF06418">
    <property type="entry name" value="CTP_synth_N"/>
    <property type="match status" value="1"/>
</dbReference>
<dbReference type="Pfam" id="PF00117">
    <property type="entry name" value="GATase"/>
    <property type="match status" value="1"/>
</dbReference>
<dbReference type="SUPFAM" id="SSF52317">
    <property type="entry name" value="Class I glutamine amidotransferase-like"/>
    <property type="match status" value="1"/>
</dbReference>
<dbReference type="SUPFAM" id="SSF52540">
    <property type="entry name" value="P-loop containing nucleoside triphosphate hydrolases"/>
    <property type="match status" value="1"/>
</dbReference>
<dbReference type="PROSITE" id="PS51273">
    <property type="entry name" value="GATASE_TYPE_1"/>
    <property type="match status" value="1"/>
</dbReference>
<reference key="1">
    <citation type="journal article" date="1999" name="Nat. Genet.">
        <title>Comparative genomes of Chlamydia pneumoniae and C. trachomatis.</title>
        <authorList>
            <person name="Kalman S."/>
            <person name="Mitchell W.P."/>
            <person name="Marathe R."/>
            <person name="Lammel C.J."/>
            <person name="Fan J."/>
            <person name="Hyman R.W."/>
            <person name="Olinger L."/>
            <person name="Grimwood J."/>
            <person name="Davis R.W."/>
            <person name="Stephens R.S."/>
        </authorList>
    </citation>
    <scope>NUCLEOTIDE SEQUENCE [LARGE SCALE GENOMIC DNA]</scope>
    <source>
        <strain>CWL029</strain>
    </source>
</reference>
<reference key="2">
    <citation type="journal article" date="2000" name="Nucleic Acids Res.">
        <title>Genome sequences of Chlamydia trachomatis MoPn and Chlamydia pneumoniae AR39.</title>
        <authorList>
            <person name="Read T.D."/>
            <person name="Brunham R.C."/>
            <person name="Shen C."/>
            <person name="Gill S.R."/>
            <person name="Heidelberg J.F."/>
            <person name="White O."/>
            <person name="Hickey E.K."/>
            <person name="Peterson J.D."/>
            <person name="Utterback T.R."/>
            <person name="Berry K.J."/>
            <person name="Bass S."/>
            <person name="Linher K.D."/>
            <person name="Weidman J.F."/>
            <person name="Khouri H.M."/>
            <person name="Craven B."/>
            <person name="Bowman C."/>
            <person name="Dodson R.J."/>
            <person name="Gwinn M.L."/>
            <person name="Nelson W.C."/>
            <person name="DeBoy R.T."/>
            <person name="Kolonay J.F."/>
            <person name="McClarty G."/>
            <person name="Salzberg S.L."/>
            <person name="Eisen J.A."/>
            <person name="Fraser C.M."/>
        </authorList>
    </citation>
    <scope>NUCLEOTIDE SEQUENCE [LARGE SCALE GENOMIC DNA]</scope>
    <source>
        <strain>AR39</strain>
    </source>
</reference>
<reference key="3">
    <citation type="journal article" date="2000" name="Nucleic Acids Res.">
        <title>Comparison of whole genome sequences of Chlamydia pneumoniae J138 from Japan and CWL029 from USA.</title>
        <authorList>
            <person name="Shirai M."/>
            <person name="Hirakawa H."/>
            <person name="Kimoto M."/>
            <person name="Tabuchi M."/>
            <person name="Kishi F."/>
            <person name="Ouchi K."/>
            <person name="Shiba T."/>
            <person name="Ishii K."/>
            <person name="Hattori M."/>
            <person name="Kuhara S."/>
            <person name="Nakazawa T."/>
        </authorList>
    </citation>
    <scope>NUCLEOTIDE SEQUENCE [LARGE SCALE GENOMIC DNA]</scope>
    <source>
        <strain>J138</strain>
    </source>
</reference>
<reference key="4">
    <citation type="submission" date="2002-05" db="EMBL/GenBank/DDBJ databases">
        <title>The genome sequence of Chlamydia pneumoniae TW183 and comparison with other Chlamydia strains based on whole genome sequence analysis.</title>
        <authorList>
            <person name="Geng M.M."/>
            <person name="Schuhmacher A."/>
            <person name="Muehldorfer I."/>
            <person name="Bensch K.W."/>
            <person name="Schaefer K.P."/>
            <person name="Schneider S."/>
            <person name="Pohl T."/>
            <person name="Essig A."/>
            <person name="Marre R."/>
            <person name="Melchers K."/>
        </authorList>
    </citation>
    <scope>NUCLEOTIDE SEQUENCE [LARGE SCALE GENOMIC DNA]</scope>
    <source>
        <strain>TW-183</strain>
    </source>
</reference>
<accession>Q9Z8U8</accession>
<accession>Q9JRV7</accession>
<name>PYRG_CHLPN</name>
<proteinExistence type="inferred from homology"/>